<gene>
    <name type="ordered locus">Gbem_3313</name>
</gene>
<feature type="chain" id="PRO_1000132196" description="Probable transcriptional regulatory protein Gbem_3313">
    <location>
        <begin position="1"/>
        <end position="247"/>
    </location>
</feature>
<keyword id="KW-0963">Cytoplasm</keyword>
<keyword id="KW-0238">DNA-binding</keyword>
<keyword id="KW-1185">Reference proteome</keyword>
<keyword id="KW-0804">Transcription</keyword>
<keyword id="KW-0805">Transcription regulation</keyword>
<proteinExistence type="inferred from homology"/>
<sequence>MSGHNKWSTIKHKKGAADAKRGKVFTKIIKEITVAAKLGGGDPDGNPRLRTAIDKAKGENMPKDNVERAIKKGVGGLEGTTYEETTYEGYGPGGTAVLVEVMTDNRNRTVSDVRSIFTKCNGNMGESGCVSWLFDKKGLLVFPKSIDFDKLFEASIEAGADDVTDEDEQYEVLTDPAAFHQVKTALEGAGFKAESAEITMIPQTMVKLEGKNAENMLKLMDRMEDNDDVQNVYANFDISEEEMEKMM</sequence>
<name>Y3313_CITBB</name>
<organism>
    <name type="scientific">Citrifermentans bemidjiense (strain ATCC BAA-1014 / DSM 16622 / JCM 12645 / Bem)</name>
    <name type="common">Geobacter bemidjiensis</name>
    <dbReference type="NCBI Taxonomy" id="404380"/>
    <lineage>
        <taxon>Bacteria</taxon>
        <taxon>Pseudomonadati</taxon>
        <taxon>Thermodesulfobacteriota</taxon>
        <taxon>Desulfuromonadia</taxon>
        <taxon>Geobacterales</taxon>
        <taxon>Geobacteraceae</taxon>
        <taxon>Citrifermentans</taxon>
    </lineage>
</organism>
<dbReference type="EMBL" id="CP001124">
    <property type="protein sequence ID" value="ACH40309.1"/>
    <property type="molecule type" value="Genomic_DNA"/>
</dbReference>
<dbReference type="RefSeq" id="WP_012531742.1">
    <property type="nucleotide sequence ID" value="NC_011146.1"/>
</dbReference>
<dbReference type="SMR" id="B5EAH0"/>
<dbReference type="STRING" id="404380.Gbem_3313"/>
<dbReference type="KEGG" id="gbm:Gbem_3313"/>
<dbReference type="eggNOG" id="COG0217">
    <property type="taxonomic scope" value="Bacteria"/>
</dbReference>
<dbReference type="HOGENOM" id="CLU_062974_2_2_7"/>
<dbReference type="OrthoDB" id="9781053at2"/>
<dbReference type="Proteomes" id="UP000008825">
    <property type="component" value="Chromosome"/>
</dbReference>
<dbReference type="GO" id="GO:0005829">
    <property type="term" value="C:cytosol"/>
    <property type="evidence" value="ECO:0007669"/>
    <property type="project" value="TreeGrafter"/>
</dbReference>
<dbReference type="GO" id="GO:0003677">
    <property type="term" value="F:DNA binding"/>
    <property type="evidence" value="ECO:0007669"/>
    <property type="project" value="UniProtKB-UniRule"/>
</dbReference>
<dbReference type="GO" id="GO:0006355">
    <property type="term" value="P:regulation of DNA-templated transcription"/>
    <property type="evidence" value="ECO:0007669"/>
    <property type="project" value="UniProtKB-UniRule"/>
</dbReference>
<dbReference type="FunFam" id="1.10.10.200:FF:000001">
    <property type="entry name" value="Probable transcriptional regulatory protein YebC"/>
    <property type="match status" value="1"/>
</dbReference>
<dbReference type="FunFam" id="3.30.70.980:FF:000002">
    <property type="entry name" value="Probable transcriptional regulatory protein YebC"/>
    <property type="match status" value="1"/>
</dbReference>
<dbReference type="Gene3D" id="1.10.10.200">
    <property type="match status" value="1"/>
</dbReference>
<dbReference type="Gene3D" id="3.30.70.980">
    <property type="match status" value="2"/>
</dbReference>
<dbReference type="HAMAP" id="MF_00693">
    <property type="entry name" value="Transcrip_reg_TACO1"/>
    <property type="match status" value="1"/>
</dbReference>
<dbReference type="InterPro" id="IPR017856">
    <property type="entry name" value="Integrase-like_N"/>
</dbReference>
<dbReference type="InterPro" id="IPR048300">
    <property type="entry name" value="TACO1_YebC-like_2nd/3rd_dom"/>
</dbReference>
<dbReference type="InterPro" id="IPR049083">
    <property type="entry name" value="TACO1_YebC_N"/>
</dbReference>
<dbReference type="InterPro" id="IPR002876">
    <property type="entry name" value="Transcrip_reg_TACO1-like"/>
</dbReference>
<dbReference type="InterPro" id="IPR026564">
    <property type="entry name" value="Transcrip_reg_TACO1-like_dom3"/>
</dbReference>
<dbReference type="InterPro" id="IPR029072">
    <property type="entry name" value="YebC-like"/>
</dbReference>
<dbReference type="NCBIfam" id="NF001030">
    <property type="entry name" value="PRK00110.1"/>
    <property type="match status" value="1"/>
</dbReference>
<dbReference type="NCBIfam" id="NF009044">
    <property type="entry name" value="PRK12378.1"/>
    <property type="match status" value="1"/>
</dbReference>
<dbReference type="NCBIfam" id="TIGR01033">
    <property type="entry name" value="YebC/PmpR family DNA-binding transcriptional regulator"/>
    <property type="match status" value="1"/>
</dbReference>
<dbReference type="PANTHER" id="PTHR12532:SF6">
    <property type="entry name" value="TRANSCRIPTIONAL REGULATORY PROTEIN YEBC-RELATED"/>
    <property type="match status" value="1"/>
</dbReference>
<dbReference type="PANTHER" id="PTHR12532">
    <property type="entry name" value="TRANSLATIONAL ACTIVATOR OF CYTOCHROME C OXIDASE 1"/>
    <property type="match status" value="1"/>
</dbReference>
<dbReference type="Pfam" id="PF20772">
    <property type="entry name" value="TACO1_YebC_N"/>
    <property type="match status" value="1"/>
</dbReference>
<dbReference type="Pfam" id="PF01709">
    <property type="entry name" value="Transcrip_reg"/>
    <property type="match status" value="1"/>
</dbReference>
<dbReference type="SUPFAM" id="SSF75625">
    <property type="entry name" value="YebC-like"/>
    <property type="match status" value="1"/>
</dbReference>
<comment type="subcellular location">
    <subcellularLocation>
        <location evidence="1">Cytoplasm</location>
    </subcellularLocation>
</comment>
<comment type="similarity">
    <text evidence="1">Belongs to the TACO1 family.</text>
</comment>
<protein>
    <recommendedName>
        <fullName evidence="1">Probable transcriptional regulatory protein Gbem_3313</fullName>
    </recommendedName>
</protein>
<evidence type="ECO:0000255" key="1">
    <source>
        <dbReference type="HAMAP-Rule" id="MF_00693"/>
    </source>
</evidence>
<accession>B5EAH0</accession>
<reference key="1">
    <citation type="submission" date="2008-07" db="EMBL/GenBank/DDBJ databases">
        <title>Complete sequence of Geobacter bemidjiensis BEM.</title>
        <authorList>
            <consortium name="US DOE Joint Genome Institute"/>
            <person name="Lucas S."/>
            <person name="Copeland A."/>
            <person name="Lapidus A."/>
            <person name="Glavina del Rio T."/>
            <person name="Dalin E."/>
            <person name="Tice H."/>
            <person name="Bruce D."/>
            <person name="Goodwin L."/>
            <person name="Pitluck S."/>
            <person name="Kiss H."/>
            <person name="Brettin T."/>
            <person name="Detter J.C."/>
            <person name="Han C."/>
            <person name="Kuske C.R."/>
            <person name="Schmutz J."/>
            <person name="Larimer F."/>
            <person name="Land M."/>
            <person name="Hauser L."/>
            <person name="Kyrpides N."/>
            <person name="Lykidis A."/>
            <person name="Lovley D."/>
            <person name="Richardson P."/>
        </authorList>
    </citation>
    <scope>NUCLEOTIDE SEQUENCE [LARGE SCALE GENOMIC DNA]</scope>
    <source>
        <strain>ATCC BAA-1014 / DSM 16622 / JCM 12645 / Bem</strain>
    </source>
</reference>